<proteinExistence type="evidence at transcript level"/>
<protein>
    <recommendedName>
        <fullName>Gap junction delta-4 protein</fullName>
    </recommendedName>
    <alternativeName>
        <fullName>Connexin-40.1</fullName>
        <shortName>Cx40.1</shortName>
    </alternativeName>
</protein>
<sequence length="370" mass="40019">MEGVDLLGFLIITLNCNVTMXGKLWFVLTMLLRMLVIVLAGRPVYQDEQERFVCNTLQPGCANVCYDVFSPVSHLRFWLIQGVCVLLPSAVFSVYVLHRGATLAALGPRRCPEPRDTASGQRRCPGSCRERGGLEVPDFSAGYIIHLLLRTLLEAAFGALNYLLFGFLAPNKFPCTRPPCTGVVDCYVSRPTEKSLLMLFLWAVSALSFLLGLADLVCSLRRLMRRRPGPPTSPSIRKQSGAPGHPEGRPTDKEGGREQEGAPAPPVARAGGEGAGSPRVTSRVSGHTKIPDEDASEVTSSASEKLGRQPRGRPYREAAQDPRGSGSEEQPSAAPSHLAAHPSCSRLQPPDPPASSVGAPHLRARKSEWV</sequence>
<comment type="function">
    <text evidence="1">One gap junction consists of a cluster of closely packed pairs of transmembrane channels, the connexons, through which materials of low MW diffuse from one cell to a neighboring cell.</text>
</comment>
<comment type="subunit">
    <text evidence="1">A connexon is composed of a hexamer of connexins.</text>
</comment>
<comment type="subcellular location">
    <subcellularLocation>
        <location evidence="1">Cell membrane</location>
        <topology evidence="1">Multi-pass membrane protein</topology>
    </subcellularLocation>
    <subcellularLocation>
        <location evidence="1">Cell junction</location>
        <location evidence="1">Gap junction</location>
    </subcellularLocation>
</comment>
<comment type="similarity">
    <text evidence="4">Belongs to the connexin family. Delta-type subfamily.</text>
</comment>
<comment type="sequence caution" evidence="4">
    <conflict type="frameshift">
        <sequence resource="EMBL-CDS" id="BAB01599"/>
    </conflict>
</comment>
<keyword id="KW-0965">Cell junction</keyword>
<keyword id="KW-1003">Cell membrane</keyword>
<keyword id="KW-0303">Gap junction</keyword>
<keyword id="KW-0472">Membrane</keyword>
<keyword id="KW-1185">Reference proteome</keyword>
<keyword id="KW-0812">Transmembrane</keyword>
<keyword id="KW-1133">Transmembrane helix</keyword>
<reference key="1">
    <citation type="journal article" date="2001" name="Gene">
        <title>Assignment of 118 novel cDNAs of cynomolgus monkey brain to human chromosomes.</title>
        <authorList>
            <person name="Osada N."/>
            <person name="Hida M."/>
            <person name="Kususda J."/>
            <person name="Tanuma R."/>
            <person name="Iseki K."/>
            <person name="Hirata M."/>
            <person name="Suto Y."/>
            <person name="Hirai M."/>
            <person name="Terao K."/>
            <person name="Suzuki Y."/>
            <person name="Sugano S."/>
            <person name="Hashimoto K."/>
        </authorList>
    </citation>
    <scope>NUCLEOTIDE SEQUENCE [LARGE SCALE MRNA]</scope>
    <source>
        <tissue>Brain cortex</tissue>
    </source>
</reference>
<accession>Q9N0B3</accession>
<name>CXD4_MACFA</name>
<gene>
    <name type="primary">GJD4</name>
    <name type="ORF">QccE-15512</name>
</gene>
<evidence type="ECO:0000250" key="1"/>
<evidence type="ECO:0000255" key="2"/>
<evidence type="ECO:0000256" key="3">
    <source>
        <dbReference type="SAM" id="MobiDB-lite"/>
    </source>
</evidence>
<evidence type="ECO:0000305" key="4"/>
<organism>
    <name type="scientific">Macaca fascicularis</name>
    <name type="common">Crab-eating macaque</name>
    <name type="synonym">Cynomolgus monkey</name>
    <dbReference type="NCBI Taxonomy" id="9541"/>
    <lineage>
        <taxon>Eukaryota</taxon>
        <taxon>Metazoa</taxon>
        <taxon>Chordata</taxon>
        <taxon>Craniata</taxon>
        <taxon>Vertebrata</taxon>
        <taxon>Euteleostomi</taxon>
        <taxon>Mammalia</taxon>
        <taxon>Eutheria</taxon>
        <taxon>Euarchontoglires</taxon>
        <taxon>Primates</taxon>
        <taxon>Haplorrhini</taxon>
        <taxon>Catarrhini</taxon>
        <taxon>Cercopithecidae</taxon>
        <taxon>Cercopithecinae</taxon>
        <taxon>Macaca</taxon>
    </lineage>
</organism>
<feature type="chain" id="PRO_0000313010" description="Gap junction delta-4 protein">
    <location>
        <begin position="1"/>
        <end position="370"/>
    </location>
</feature>
<feature type="topological domain" description="Cytoplasmic" evidence="2">
    <location>
        <begin position="1"/>
        <end position="19"/>
    </location>
</feature>
<feature type="transmembrane region" description="Helical" evidence="2">
    <location>
        <begin position="20"/>
        <end position="40"/>
    </location>
</feature>
<feature type="topological domain" description="Extracellular" evidence="2">
    <location>
        <begin position="41"/>
        <end position="76"/>
    </location>
</feature>
<feature type="transmembrane region" description="Helical" evidence="2">
    <location>
        <begin position="77"/>
        <end position="97"/>
    </location>
</feature>
<feature type="topological domain" description="Cytoplasmic" evidence="2">
    <location>
        <begin position="98"/>
        <end position="146"/>
    </location>
</feature>
<feature type="transmembrane region" description="Helical" evidence="2">
    <location>
        <begin position="147"/>
        <end position="167"/>
    </location>
</feature>
<feature type="topological domain" description="Extracellular" evidence="2">
    <location>
        <begin position="168"/>
        <end position="196"/>
    </location>
</feature>
<feature type="transmembrane region" description="Helical" evidence="2">
    <location>
        <begin position="197"/>
        <end position="217"/>
    </location>
</feature>
<feature type="topological domain" description="Cytoplasmic" evidence="2">
    <location>
        <begin position="218"/>
        <end position="370"/>
    </location>
</feature>
<feature type="region of interest" description="Disordered" evidence="3">
    <location>
        <begin position="227"/>
        <end position="370"/>
    </location>
</feature>
<feature type="compositionally biased region" description="Basic and acidic residues" evidence="3">
    <location>
        <begin position="246"/>
        <end position="260"/>
    </location>
</feature>
<feature type="compositionally biased region" description="Low complexity" evidence="3">
    <location>
        <begin position="331"/>
        <end position="345"/>
    </location>
</feature>
<dbReference type="EMBL" id="AB046017">
    <property type="protein sequence ID" value="BAB01599.1"/>
    <property type="status" value="ALT_FRAME"/>
    <property type="molecule type" value="mRNA"/>
</dbReference>
<dbReference type="RefSeq" id="NP_001306359.1">
    <property type="nucleotide sequence ID" value="NM_001319430.1"/>
</dbReference>
<dbReference type="STRING" id="9541.ENSMFAP00000017390"/>
<dbReference type="eggNOG" id="ENOG502QWIV">
    <property type="taxonomic scope" value="Eukaryota"/>
</dbReference>
<dbReference type="Proteomes" id="UP000233100">
    <property type="component" value="Unplaced"/>
</dbReference>
<dbReference type="GO" id="GO:0005922">
    <property type="term" value="C:connexin complex"/>
    <property type="evidence" value="ECO:0007669"/>
    <property type="project" value="InterPro"/>
</dbReference>
<dbReference type="GO" id="GO:0005243">
    <property type="term" value="F:gap junction channel activity"/>
    <property type="evidence" value="ECO:0007669"/>
    <property type="project" value="TreeGrafter"/>
</dbReference>
<dbReference type="GO" id="GO:0007267">
    <property type="term" value="P:cell-cell signaling"/>
    <property type="evidence" value="ECO:0007669"/>
    <property type="project" value="TreeGrafter"/>
</dbReference>
<dbReference type="Gene3D" id="1.20.1440.80">
    <property type="entry name" value="Gap junction channel protein cysteine-rich domain"/>
    <property type="match status" value="1"/>
</dbReference>
<dbReference type="InterPro" id="IPR000500">
    <property type="entry name" value="Connexin"/>
</dbReference>
<dbReference type="InterPro" id="IPR019570">
    <property type="entry name" value="Connexin_CCC"/>
</dbReference>
<dbReference type="InterPro" id="IPR017990">
    <property type="entry name" value="Connexin_CS"/>
</dbReference>
<dbReference type="InterPro" id="IPR013092">
    <property type="entry name" value="Connexin_N"/>
</dbReference>
<dbReference type="InterPro" id="IPR038359">
    <property type="entry name" value="Connexin_N_sf"/>
</dbReference>
<dbReference type="PANTHER" id="PTHR11984">
    <property type="entry name" value="CONNEXIN"/>
    <property type="match status" value="1"/>
</dbReference>
<dbReference type="PANTHER" id="PTHR11984:SF3">
    <property type="entry name" value="GAP JUNCTION DELTA-4 PROTEIN"/>
    <property type="match status" value="1"/>
</dbReference>
<dbReference type="Pfam" id="PF00029">
    <property type="entry name" value="Connexin"/>
    <property type="match status" value="1"/>
</dbReference>
<dbReference type="PRINTS" id="PR00206">
    <property type="entry name" value="CONNEXIN"/>
</dbReference>
<dbReference type="SMART" id="SM00037">
    <property type="entry name" value="CNX"/>
    <property type="match status" value="1"/>
</dbReference>
<dbReference type="SMART" id="SM01089">
    <property type="entry name" value="Connexin_CCC"/>
    <property type="match status" value="1"/>
</dbReference>
<dbReference type="PROSITE" id="PS00407">
    <property type="entry name" value="CONNEXINS_1"/>
    <property type="match status" value="1"/>
</dbReference>
<dbReference type="PROSITE" id="PS00408">
    <property type="entry name" value="CONNEXINS_2"/>
    <property type="match status" value="1"/>
</dbReference>